<gene>
    <name evidence="2" type="primary">ddaC</name>
</gene>
<dbReference type="EC" id="1.-.-.-" evidence="3"/>
<dbReference type="EMBL" id="HQ130277">
    <property type="protein sequence ID" value="ADN39482.1"/>
    <property type="molecule type" value="Genomic_DNA"/>
</dbReference>
<dbReference type="RefSeq" id="WP_033781251.1">
    <property type="nucleotide sequence ID" value="NZ_JPOT02000004.1"/>
</dbReference>
<dbReference type="SMR" id="E2JA28"/>
<dbReference type="BioCyc" id="MetaCyc:MONOMER-19479"/>
<dbReference type="GO" id="GO:0016491">
    <property type="term" value="F:oxidoreductase activity"/>
    <property type="evidence" value="ECO:0007669"/>
    <property type="project" value="UniProtKB-KW"/>
</dbReference>
<dbReference type="GO" id="GO:0017000">
    <property type="term" value="P:antibiotic biosynthetic process"/>
    <property type="evidence" value="ECO:0007669"/>
    <property type="project" value="UniProtKB-KW"/>
</dbReference>
<dbReference type="Gene3D" id="3.60.130.10">
    <property type="entry name" value="Clavaminate synthase-like"/>
    <property type="match status" value="1"/>
</dbReference>
<dbReference type="InterPro" id="IPR050411">
    <property type="entry name" value="AlphaKG_dependent_hydroxylases"/>
</dbReference>
<dbReference type="InterPro" id="IPR042098">
    <property type="entry name" value="TauD-like_sf"/>
</dbReference>
<dbReference type="InterPro" id="IPR003819">
    <property type="entry name" value="TauD/TfdA-like"/>
</dbReference>
<dbReference type="PANTHER" id="PTHR10696">
    <property type="entry name" value="GAMMA-BUTYROBETAINE HYDROXYLASE-RELATED"/>
    <property type="match status" value="1"/>
</dbReference>
<dbReference type="PANTHER" id="PTHR10696:SF56">
    <property type="entry name" value="TAUD_TFDA-LIKE DOMAIN-CONTAINING PROTEIN"/>
    <property type="match status" value="1"/>
</dbReference>
<dbReference type="Pfam" id="PF02668">
    <property type="entry name" value="TauD"/>
    <property type="match status" value="1"/>
</dbReference>
<dbReference type="SUPFAM" id="SSF51197">
    <property type="entry name" value="Clavaminate synthase-like"/>
    <property type="match status" value="1"/>
</dbReference>
<reference key="1">
    <citation type="journal article" date="2010" name="J. Am. Chem. Soc.">
        <title>The nonribosomal peptide synthetase enzyme DdaD tethers N(beta)-fumaramoyl-l-2,3-diaminopropionate for Fe(II)/alpha-ketoglutarate-dependent epoxidation by DdaC during dapdiamide antibiotic biosynthesis.</title>
        <authorList>
            <person name="Hollenhorst M.A."/>
            <person name="Bumpus S.B."/>
            <person name="Matthews M.L."/>
            <person name="Bollinger J.M. Jr."/>
            <person name="Kelleher N.L."/>
            <person name="Walsh C.T."/>
        </authorList>
    </citation>
    <scope>NUCLEOTIDE SEQUENCE [GENOMIC DNA]</scope>
    <scope>FUNCTION</scope>
    <scope>COFACTOR</scope>
    <scope>PATHWAY</scope>
    <source>
        <strain>CU0119</strain>
    </source>
</reference>
<evidence type="ECO:0000269" key="1">
    <source>
    </source>
</evidence>
<evidence type="ECO:0000303" key="2">
    <source>
    </source>
</evidence>
<evidence type="ECO:0000305" key="3"/>
<keyword id="KW-0045">Antibiotic biosynthesis</keyword>
<keyword id="KW-0560">Oxidoreductase</keyword>
<comment type="function">
    <text evidence="1">Involved in dapdiamide antibiotics biosynthesis. Catalyzes the alpha-ketoglutarate-dependent epoxidation of the covalently bound N-beta-fumaramoyl-DAP-S-DdaD to generate N-beta-epoxysuccinamoyl-DAP in thioester linkage to DdaD.</text>
</comment>
<comment type="cofactor">
    <cofactor evidence="1">
        <name>Fe(2+)</name>
        <dbReference type="ChEBI" id="CHEBI:29033"/>
    </cofactor>
</comment>
<comment type="pathway">
    <text evidence="1">Antibiotic biosynthesis.</text>
</comment>
<organism>
    <name type="scientific">Enterobacter agglomerans</name>
    <name type="common">Erwinia herbicola</name>
    <name type="synonym">Pantoea agglomerans</name>
    <dbReference type="NCBI Taxonomy" id="549"/>
    <lineage>
        <taxon>Bacteria</taxon>
        <taxon>Pseudomonadati</taxon>
        <taxon>Pseudomonadota</taxon>
        <taxon>Gammaproteobacteria</taxon>
        <taxon>Enterobacterales</taxon>
        <taxon>Erwiniaceae</taxon>
        <taxon>Pantoea</taxon>
        <taxon>Pantoea agglomerans group</taxon>
    </lineage>
</organism>
<protein>
    <recommendedName>
        <fullName evidence="3">Dapdiamide synthesis protein DdaC</fullName>
        <ecNumber evidence="3">1.-.-.-</ecNumber>
    </recommendedName>
</protein>
<accession>E2JA28</accession>
<sequence>MSHSYNVRPLVSGAPHVSLVTASTSDASIDEFFSHHPIDEILSEKGALLFRGFSINEDQQFSQLVSILAKEELTYQERSTQRKKTAQGVYTSTEYPAAKTIANHSENAFQQVVPGKILFYAHQAALKGGETPIADNSRVLSLIDEEIVAEFRQKGIRYLRNFDGGFDLSWQEAFQTEKKREVETYCVKNAIDCEWLSDSHLRTSQLRSATRRHPLNRKEMWFNQLHLFHITNLELPVRQALLASLGHDLLPRHAVYGTGEEIPDEVVDHIRAALVKAELVFPWQTGDVLIADNILVSHGRKPFEGERAVRVALIDPVYPSAEENPHAQR</sequence>
<feature type="chain" id="PRO_0000434791" description="Dapdiamide synthesis protein DdaC">
    <location>
        <begin position="1"/>
        <end position="329"/>
    </location>
</feature>
<name>DDAC_ENTAG</name>
<proteinExistence type="predicted"/>